<comment type="function">
    <text evidence="1">ATP-dependent RNA helicase which is a subunit of the eIF4F complex involved in cap recognition and is required for mRNA binding to ribosome. In the current model of translation initiation, eIF4A unwinds RNA secondary structures in the 5'-UTR of mRNAs which is necessary to allow efficient binding of the small ribosomal subunit, and subsequent scanning for the initiator codon (By similarity).</text>
</comment>
<comment type="catalytic activity">
    <reaction>
        <text>ATP + H2O = ADP + phosphate + H(+)</text>
        <dbReference type="Rhea" id="RHEA:13065"/>
        <dbReference type="ChEBI" id="CHEBI:15377"/>
        <dbReference type="ChEBI" id="CHEBI:15378"/>
        <dbReference type="ChEBI" id="CHEBI:30616"/>
        <dbReference type="ChEBI" id="CHEBI:43474"/>
        <dbReference type="ChEBI" id="CHEBI:456216"/>
        <dbReference type="EC" id="3.6.4.13"/>
    </reaction>
</comment>
<comment type="subunit">
    <text evidence="1">eIF4F is a multi-subunit complex, the composition of which varies with external and internal environmental conditions. It is composed of at least EIF4A, EIF4E and EIF4G1/EIFFG3 (By similarity). Interacts with EIF4E (By similarity).</text>
</comment>
<comment type="similarity">
    <text evidence="5">Belongs to the DEAD box helicase family. eIF4A subfamily.</text>
</comment>
<accession>Q8JFP1</accession>
<gene>
    <name type="primary">EIF4A2</name>
    <name type="ORF">RCJMB04_14a6</name>
</gene>
<feature type="chain" id="PRO_0000252336" description="Eukaryotic initiation factor 4A-II">
    <location>
        <begin position="1"/>
        <end position="407"/>
    </location>
</feature>
<feature type="domain" description="Helicase ATP-binding" evidence="2">
    <location>
        <begin position="64"/>
        <end position="235"/>
    </location>
</feature>
<feature type="domain" description="Helicase C-terminal" evidence="3">
    <location>
        <begin position="246"/>
        <end position="407"/>
    </location>
</feature>
<feature type="region of interest" description="Disordered" evidence="4">
    <location>
        <begin position="1"/>
        <end position="23"/>
    </location>
</feature>
<feature type="short sequence motif" description="Q motif">
    <location>
        <begin position="33"/>
        <end position="61"/>
    </location>
</feature>
<feature type="short sequence motif" description="DEAD box">
    <location>
        <begin position="183"/>
        <end position="186"/>
    </location>
</feature>
<feature type="binding site" evidence="2">
    <location>
        <begin position="77"/>
        <end position="84"/>
    </location>
    <ligand>
        <name>ATP</name>
        <dbReference type="ChEBI" id="CHEBI:30616"/>
    </ligand>
</feature>
<name>IF4A2_CHICK</name>
<proteinExistence type="evidence at transcript level"/>
<evidence type="ECO:0000250" key="1"/>
<evidence type="ECO:0000255" key="2">
    <source>
        <dbReference type="PROSITE-ProRule" id="PRU00541"/>
    </source>
</evidence>
<evidence type="ECO:0000255" key="3">
    <source>
        <dbReference type="PROSITE-ProRule" id="PRU00542"/>
    </source>
</evidence>
<evidence type="ECO:0000256" key="4">
    <source>
        <dbReference type="SAM" id="MobiDB-lite"/>
    </source>
</evidence>
<evidence type="ECO:0000305" key="5"/>
<sequence>MSGGSADYSRDHGGPEGMEPDGVIESNWNEIVDNFDDMNLKESLLRGIYAYGFEKPSAIQQRAIIPCIKGYDVIAQAQSGTGKTATFAISILQQLEIDLKETQALVLAPTRELAQQIQKVILALGDYMGATCHACIGGTNVRNEMQKLQAEAPHIVVGTPGRVFDMLNRRYLSPKWIKMFVLDEADEMLSRGFKDQIYEIFQKLSTNIQVVLLSATMPMDVLEVTKKFMREPIRILVKKEELTLEGIKQFYINVEREEWKLDTLCDLYETLTITQAVIFLNTRRKVDWLTEKMHARDFTVSALHGDMDQKERDVIMREFRSGSSRVLITTDLLARGIDVQQVSLVINYDLPTNRENYIHRIGRGGRFGRKGVAINFVTEEDKRILRDIETFYNTTVEEMPMNVADLI</sequence>
<keyword id="KW-0067">ATP-binding</keyword>
<keyword id="KW-0347">Helicase</keyword>
<keyword id="KW-0378">Hydrolase</keyword>
<keyword id="KW-0396">Initiation factor</keyword>
<keyword id="KW-0547">Nucleotide-binding</keyword>
<keyword id="KW-0648">Protein biosynthesis</keyword>
<keyword id="KW-1185">Reference proteome</keyword>
<keyword id="KW-0694">RNA-binding</keyword>
<organism>
    <name type="scientific">Gallus gallus</name>
    <name type="common">Chicken</name>
    <dbReference type="NCBI Taxonomy" id="9031"/>
    <lineage>
        <taxon>Eukaryota</taxon>
        <taxon>Metazoa</taxon>
        <taxon>Chordata</taxon>
        <taxon>Craniata</taxon>
        <taxon>Vertebrata</taxon>
        <taxon>Euteleostomi</taxon>
        <taxon>Archelosauria</taxon>
        <taxon>Archosauria</taxon>
        <taxon>Dinosauria</taxon>
        <taxon>Saurischia</taxon>
        <taxon>Theropoda</taxon>
        <taxon>Coelurosauria</taxon>
        <taxon>Aves</taxon>
        <taxon>Neognathae</taxon>
        <taxon>Galloanserae</taxon>
        <taxon>Galliformes</taxon>
        <taxon>Phasianidae</taxon>
        <taxon>Phasianinae</taxon>
        <taxon>Gallus</taxon>
    </lineage>
</organism>
<protein>
    <recommendedName>
        <fullName>Eukaryotic initiation factor 4A-II</fullName>
        <shortName>eIF-4A-II</shortName>
        <shortName>eIF4A-II</shortName>
        <ecNumber>3.6.4.13</ecNumber>
    </recommendedName>
    <alternativeName>
        <fullName>ATP-dependent RNA helicase eIF4A-2</fullName>
    </alternativeName>
</protein>
<dbReference type="EC" id="3.6.4.13"/>
<dbReference type="EMBL" id="AF515726">
    <property type="protein sequence ID" value="AAM53975.1"/>
    <property type="molecule type" value="mRNA"/>
</dbReference>
<dbReference type="EMBL" id="AJ720280">
    <property type="protein sequence ID" value="CAG31939.1"/>
    <property type="molecule type" value="mRNA"/>
</dbReference>
<dbReference type="RefSeq" id="NP_989880.1">
    <property type="nucleotide sequence ID" value="NM_204549.3"/>
</dbReference>
<dbReference type="RefSeq" id="XP_015146854.1">
    <property type="nucleotide sequence ID" value="XM_015291368.1"/>
</dbReference>
<dbReference type="SMR" id="Q8JFP1"/>
<dbReference type="BioGRID" id="675526">
    <property type="interactions" value="1"/>
</dbReference>
<dbReference type="FunCoup" id="Q8JFP1">
    <property type="interactions" value="3190"/>
</dbReference>
<dbReference type="STRING" id="9031.ENSGALP00000057000"/>
<dbReference type="PaxDb" id="9031-ENSGALP00000014119"/>
<dbReference type="GeneID" id="395232"/>
<dbReference type="KEGG" id="gga:395232"/>
<dbReference type="CTD" id="1974"/>
<dbReference type="VEuPathDB" id="HostDB:geneid_395232"/>
<dbReference type="eggNOG" id="KOG0327">
    <property type="taxonomic scope" value="Eukaryota"/>
</dbReference>
<dbReference type="InParanoid" id="Q8JFP1"/>
<dbReference type="OMA" id="FGCQALV"/>
<dbReference type="OrthoDB" id="10265785at2759"/>
<dbReference type="PhylomeDB" id="Q8JFP1"/>
<dbReference type="TreeFam" id="TF101524"/>
<dbReference type="PRO" id="PR:Q8JFP1"/>
<dbReference type="Proteomes" id="UP000000539">
    <property type="component" value="Unassembled WGS sequence"/>
</dbReference>
<dbReference type="GO" id="GO:0005524">
    <property type="term" value="F:ATP binding"/>
    <property type="evidence" value="ECO:0007669"/>
    <property type="project" value="UniProtKB-KW"/>
</dbReference>
<dbReference type="GO" id="GO:0016887">
    <property type="term" value="F:ATP hydrolysis activity"/>
    <property type="evidence" value="ECO:0007669"/>
    <property type="project" value="RHEA"/>
</dbReference>
<dbReference type="GO" id="GO:0003729">
    <property type="term" value="F:mRNA binding"/>
    <property type="evidence" value="ECO:0000318"/>
    <property type="project" value="GO_Central"/>
</dbReference>
<dbReference type="GO" id="GO:0003724">
    <property type="term" value="F:RNA helicase activity"/>
    <property type="evidence" value="ECO:0000318"/>
    <property type="project" value="GO_Central"/>
</dbReference>
<dbReference type="GO" id="GO:0003743">
    <property type="term" value="F:translation initiation factor activity"/>
    <property type="evidence" value="ECO:0007669"/>
    <property type="project" value="UniProtKB-KW"/>
</dbReference>
<dbReference type="CDD" id="cd18046">
    <property type="entry name" value="DEADc_EIF4AII_EIF4AI_DDX2"/>
    <property type="match status" value="1"/>
</dbReference>
<dbReference type="CDD" id="cd18787">
    <property type="entry name" value="SF2_C_DEAD"/>
    <property type="match status" value="1"/>
</dbReference>
<dbReference type="FunFam" id="3.40.50.300:FF:000089">
    <property type="entry name" value="Eukaryotic initiation factor 4A-II"/>
    <property type="match status" value="1"/>
</dbReference>
<dbReference type="FunFam" id="3.40.50.300:FF:000031">
    <property type="entry name" value="Eukaryotic initiation factor 4A-III"/>
    <property type="match status" value="1"/>
</dbReference>
<dbReference type="Gene3D" id="3.40.50.300">
    <property type="entry name" value="P-loop containing nucleotide triphosphate hydrolases"/>
    <property type="match status" value="2"/>
</dbReference>
<dbReference type="InterPro" id="IPR011545">
    <property type="entry name" value="DEAD/DEAH_box_helicase_dom"/>
</dbReference>
<dbReference type="InterPro" id="IPR044728">
    <property type="entry name" value="EIF4A_DEADc"/>
</dbReference>
<dbReference type="InterPro" id="IPR014001">
    <property type="entry name" value="Helicase_ATP-bd"/>
</dbReference>
<dbReference type="InterPro" id="IPR001650">
    <property type="entry name" value="Helicase_C-like"/>
</dbReference>
<dbReference type="InterPro" id="IPR027417">
    <property type="entry name" value="P-loop_NTPase"/>
</dbReference>
<dbReference type="InterPro" id="IPR000629">
    <property type="entry name" value="RNA-helicase_DEAD-box_CS"/>
</dbReference>
<dbReference type="InterPro" id="IPR014014">
    <property type="entry name" value="RNA_helicase_DEAD_Q_motif"/>
</dbReference>
<dbReference type="PANTHER" id="PTHR47958">
    <property type="entry name" value="ATP-DEPENDENT RNA HELICASE DBP3"/>
    <property type="match status" value="1"/>
</dbReference>
<dbReference type="Pfam" id="PF00270">
    <property type="entry name" value="DEAD"/>
    <property type="match status" value="1"/>
</dbReference>
<dbReference type="Pfam" id="PF00271">
    <property type="entry name" value="Helicase_C"/>
    <property type="match status" value="1"/>
</dbReference>
<dbReference type="SMART" id="SM00487">
    <property type="entry name" value="DEXDc"/>
    <property type="match status" value="1"/>
</dbReference>
<dbReference type="SMART" id="SM00490">
    <property type="entry name" value="HELICc"/>
    <property type="match status" value="1"/>
</dbReference>
<dbReference type="SUPFAM" id="SSF52540">
    <property type="entry name" value="P-loop containing nucleoside triphosphate hydrolases"/>
    <property type="match status" value="2"/>
</dbReference>
<dbReference type="PROSITE" id="PS00039">
    <property type="entry name" value="DEAD_ATP_HELICASE"/>
    <property type="match status" value="1"/>
</dbReference>
<dbReference type="PROSITE" id="PS51192">
    <property type="entry name" value="HELICASE_ATP_BIND_1"/>
    <property type="match status" value="1"/>
</dbReference>
<dbReference type="PROSITE" id="PS51194">
    <property type="entry name" value="HELICASE_CTER"/>
    <property type="match status" value="1"/>
</dbReference>
<dbReference type="PROSITE" id="PS51195">
    <property type="entry name" value="Q_MOTIF"/>
    <property type="match status" value="1"/>
</dbReference>
<reference key="1">
    <citation type="submission" date="2002-05" db="EMBL/GenBank/DDBJ databases">
        <authorList>
            <person name="Tacken M.G.J."/>
            <person name="Thomas A.A.M."/>
            <person name="Peeters B.P.H."/>
            <person name="Rottier P.J.M."/>
            <person name="Boot H.J."/>
        </authorList>
    </citation>
    <scope>NUCLEOTIDE SEQUENCE [MRNA]</scope>
    <source>
        <tissue>Bursa of Fabricius</tissue>
    </source>
</reference>
<reference key="2">
    <citation type="journal article" date="2005" name="Genome Biol.">
        <title>Full-length cDNAs from chicken bursal lymphocytes to facilitate gene function analysis.</title>
        <authorList>
            <person name="Caldwell R.B."/>
            <person name="Kierzek A.M."/>
            <person name="Arakawa H."/>
            <person name="Bezzubov Y."/>
            <person name="Zaim J."/>
            <person name="Fiedler P."/>
            <person name="Kutter S."/>
            <person name="Blagodatski A."/>
            <person name="Kostovska D."/>
            <person name="Koter M."/>
            <person name="Plachy J."/>
            <person name="Carninci P."/>
            <person name="Hayashizaki Y."/>
            <person name="Buerstedde J.-M."/>
        </authorList>
    </citation>
    <scope>NUCLEOTIDE SEQUENCE [LARGE SCALE MRNA]</scope>
    <source>
        <strain>CB</strain>
        <tissue>Bursa of Fabricius</tissue>
    </source>
</reference>